<gene>
    <name evidence="1" type="primary">rpsC</name>
    <name type="ordered locus">BF3997</name>
</gene>
<organism>
    <name type="scientific">Bacteroides fragilis (strain ATCC 25285 / DSM 2151 / CCUG 4856 / JCM 11019 / LMG 10263 / NCTC 9343 / Onslow / VPI 2553 / EN-2)</name>
    <dbReference type="NCBI Taxonomy" id="272559"/>
    <lineage>
        <taxon>Bacteria</taxon>
        <taxon>Pseudomonadati</taxon>
        <taxon>Bacteroidota</taxon>
        <taxon>Bacteroidia</taxon>
        <taxon>Bacteroidales</taxon>
        <taxon>Bacteroidaceae</taxon>
        <taxon>Bacteroides</taxon>
    </lineage>
</organism>
<accession>Q5L8B5</accession>
<keyword id="KW-0687">Ribonucleoprotein</keyword>
<keyword id="KW-0689">Ribosomal protein</keyword>
<keyword id="KW-0694">RNA-binding</keyword>
<keyword id="KW-0699">rRNA-binding</keyword>
<protein>
    <recommendedName>
        <fullName evidence="1">Small ribosomal subunit protein uS3</fullName>
    </recommendedName>
    <alternativeName>
        <fullName evidence="3">30S ribosomal protein S3</fullName>
    </alternativeName>
</protein>
<sequence>MGQKVNPISNRLGIIRGWDSNWYGGNDYGDSLLEDSKIRKYLNARLAKASVSRIVIERTLKLVTITVCTARPGIIIGKGGQEVDKLKEELKKVTDKDIQINIFEVKRPELDAVIVANNIARQVEGKIAYRRAIKMAIANTMRMGAEGIKIQISGRLNGAEMARSEMYKEGRTPLHTFRADIDYCHAEALTKVGLLGIKVWICRGEVFGKRELAPNFTQSKESGRGNNGGNNGGGKNFKRKKNNR</sequence>
<feature type="chain" id="PRO_0000230680" description="Small ribosomal subunit protein uS3">
    <location>
        <begin position="1"/>
        <end position="244"/>
    </location>
</feature>
<feature type="domain" description="KH type-2" evidence="1">
    <location>
        <begin position="38"/>
        <end position="106"/>
    </location>
</feature>
<feature type="region of interest" description="Disordered" evidence="2">
    <location>
        <begin position="217"/>
        <end position="244"/>
    </location>
</feature>
<feature type="compositionally biased region" description="Gly residues" evidence="2">
    <location>
        <begin position="225"/>
        <end position="235"/>
    </location>
</feature>
<reference key="1">
    <citation type="journal article" date="2005" name="Science">
        <title>Extensive DNA inversions in the B. fragilis genome control variable gene expression.</title>
        <authorList>
            <person name="Cerdeno-Tarraga A.-M."/>
            <person name="Patrick S."/>
            <person name="Crossman L.C."/>
            <person name="Blakely G."/>
            <person name="Abratt V."/>
            <person name="Lennard N."/>
            <person name="Poxton I."/>
            <person name="Duerden B."/>
            <person name="Harris B."/>
            <person name="Quail M.A."/>
            <person name="Barron A."/>
            <person name="Clark L."/>
            <person name="Corton C."/>
            <person name="Doggett J."/>
            <person name="Holden M.T.G."/>
            <person name="Larke N."/>
            <person name="Line A."/>
            <person name="Lord A."/>
            <person name="Norbertczak H."/>
            <person name="Ormond D."/>
            <person name="Price C."/>
            <person name="Rabbinowitsch E."/>
            <person name="Woodward J."/>
            <person name="Barrell B.G."/>
            <person name="Parkhill J."/>
        </authorList>
    </citation>
    <scope>NUCLEOTIDE SEQUENCE [LARGE SCALE GENOMIC DNA]</scope>
    <source>
        <strain>ATCC 25285 / DSM 2151 / CCUG 4856 / JCM 11019 / LMG 10263 / NCTC 9343 / Onslow / VPI 2553 / EN-2</strain>
    </source>
</reference>
<comment type="function">
    <text evidence="1">Binds the lower part of the 30S subunit head. Binds mRNA in the 70S ribosome, positioning it for translation.</text>
</comment>
<comment type="subunit">
    <text evidence="1">Part of the 30S ribosomal subunit. Forms a tight complex with proteins S10 and S14.</text>
</comment>
<comment type="similarity">
    <text evidence="1">Belongs to the universal ribosomal protein uS3 family.</text>
</comment>
<evidence type="ECO:0000255" key="1">
    <source>
        <dbReference type="HAMAP-Rule" id="MF_01309"/>
    </source>
</evidence>
<evidence type="ECO:0000256" key="2">
    <source>
        <dbReference type="SAM" id="MobiDB-lite"/>
    </source>
</evidence>
<evidence type="ECO:0000305" key="3"/>
<dbReference type="EMBL" id="CR626927">
    <property type="protein sequence ID" value="CAH09673.1"/>
    <property type="molecule type" value="Genomic_DNA"/>
</dbReference>
<dbReference type="RefSeq" id="WP_005782201.1">
    <property type="nucleotide sequence ID" value="NZ_UFTH01000001.1"/>
</dbReference>
<dbReference type="SMR" id="Q5L8B5"/>
<dbReference type="PaxDb" id="272559-BF9343_3892"/>
<dbReference type="GeneID" id="93105318"/>
<dbReference type="KEGG" id="bfs:BF9343_3892"/>
<dbReference type="eggNOG" id="COG0092">
    <property type="taxonomic scope" value="Bacteria"/>
</dbReference>
<dbReference type="HOGENOM" id="CLU_058591_0_2_10"/>
<dbReference type="Proteomes" id="UP000006731">
    <property type="component" value="Chromosome"/>
</dbReference>
<dbReference type="GO" id="GO:0022627">
    <property type="term" value="C:cytosolic small ribosomal subunit"/>
    <property type="evidence" value="ECO:0007669"/>
    <property type="project" value="TreeGrafter"/>
</dbReference>
<dbReference type="GO" id="GO:0003729">
    <property type="term" value="F:mRNA binding"/>
    <property type="evidence" value="ECO:0007669"/>
    <property type="project" value="UniProtKB-UniRule"/>
</dbReference>
<dbReference type="GO" id="GO:0019843">
    <property type="term" value="F:rRNA binding"/>
    <property type="evidence" value="ECO:0007669"/>
    <property type="project" value="UniProtKB-UniRule"/>
</dbReference>
<dbReference type="GO" id="GO:0003735">
    <property type="term" value="F:structural constituent of ribosome"/>
    <property type="evidence" value="ECO:0007669"/>
    <property type="project" value="InterPro"/>
</dbReference>
<dbReference type="GO" id="GO:0006412">
    <property type="term" value="P:translation"/>
    <property type="evidence" value="ECO:0007669"/>
    <property type="project" value="UniProtKB-UniRule"/>
</dbReference>
<dbReference type="CDD" id="cd02412">
    <property type="entry name" value="KH-II_30S_S3"/>
    <property type="match status" value="1"/>
</dbReference>
<dbReference type="FunFam" id="3.30.1140.32:FF:000007">
    <property type="entry name" value="30S ribosomal protein S3"/>
    <property type="match status" value="1"/>
</dbReference>
<dbReference type="FunFam" id="3.30.300.20:FF:000001">
    <property type="entry name" value="30S ribosomal protein S3"/>
    <property type="match status" value="1"/>
</dbReference>
<dbReference type="Gene3D" id="3.30.300.20">
    <property type="match status" value="1"/>
</dbReference>
<dbReference type="Gene3D" id="3.30.1140.32">
    <property type="entry name" value="Ribosomal protein S3, C-terminal domain"/>
    <property type="match status" value="1"/>
</dbReference>
<dbReference type="HAMAP" id="MF_01309_B">
    <property type="entry name" value="Ribosomal_uS3_B"/>
    <property type="match status" value="1"/>
</dbReference>
<dbReference type="InterPro" id="IPR004087">
    <property type="entry name" value="KH_dom"/>
</dbReference>
<dbReference type="InterPro" id="IPR015946">
    <property type="entry name" value="KH_dom-like_a/b"/>
</dbReference>
<dbReference type="InterPro" id="IPR004044">
    <property type="entry name" value="KH_dom_type_2"/>
</dbReference>
<dbReference type="InterPro" id="IPR009019">
    <property type="entry name" value="KH_sf_prok-type"/>
</dbReference>
<dbReference type="InterPro" id="IPR036419">
    <property type="entry name" value="Ribosomal_S3_C_sf"/>
</dbReference>
<dbReference type="InterPro" id="IPR005704">
    <property type="entry name" value="Ribosomal_uS3_bac-typ"/>
</dbReference>
<dbReference type="InterPro" id="IPR001351">
    <property type="entry name" value="Ribosomal_uS3_C"/>
</dbReference>
<dbReference type="InterPro" id="IPR018280">
    <property type="entry name" value="Ribosomal_uS3_CS"/>
</dbReference>
<dbReference type="NCBIfam" id="TIGR01009">
    <property type="entry name" value="rpsC_bact"/>
    <property type="match status" value="1"/>
</dbReference>
<dbReference type="PANTHER" id="PTHR11760">
    <property type="entry name" value="30S/40S RIBOSOMAL PROTEIN S3"/>
    <property type="match status" value="1"/>
</dbReference>
<dbReference type="PANTHER" id="PTHR11760:SF19">
    <property type="entry name" value="SMALL RIBOSOMAL SUBUNIT PROTEIN US3C"/>
    <property type="match status" value="1"/>
</dbReference>
<dbReference type="Pfam" id="PF07650">
    <property type="entry name" value="KH_2"/>
    <property type="match status" value="1"/>
</dbReference>
<dbReference type="Pfam" id="PF00189">
    <property type="entry name" value="Ribosomal_S3_C"/>
    <property type="match status" value="1"/>
</dbReference>
<dbReference type="SMART" id="SM00322">
    <property type="entry name" value="KH"/>
    <property type="match status" value="1"/>
</dbReference>
<dbReference type="SUPFAM" id="SSF54814">
    <property type="entry name" value="Prokaryotic type KH domain (KH-domain type II)"/>
    <property type="match status" value="1"/>
</dbReference>
<dbReference type="SUPFAM" id="SSF54821">
    <property type="entry name" value="Ribosomal protein S3 C-terminal domain"/>
    <property type="match status" value="1"/>
</dbReference>
<dbReference type="PROSITE" id="PS50823">
    <property type="entry name" value="KH_TYPE_2"/>
    <property type="match status" value="1"/>
</dbReference>
<dbReference type="PROSITE" id="PS00548">
    <property type="entry name" value="RIBOSOMAL_S3"/>
    <property type="match status" value="1"/>
</dbReference>
<proteinExistence type="inferred from homology"/>
<name>RS3_BACFN</name>